<proteinExistence type="inferred from homology"/>
<keyword id="KW-0058">Aromatic hydrocarbons catabolism</keyword>
<keyword id="KW-0520">NAD</keyword>
<keyword id="KW-0560">Oxidoreductase</keyword>
<reference key="1">
    <citation type="submission" date="2009-01" db="EMBL/GenBank/DDBJ databases">
        <title>Complete sequence of Chloroflexus sp. Y-400-fl.</title>
        <authorList>
            <consortium name="US DOE Joint Genome Institute"/>
            <person name="Lucas S."/>
            <person name="Copeland A."/>
            <person name="Lapidus A."/>
            <person name="Glavina del Rio T."/>
            <person name="Dalin E."/>
            <person name="Tice H."/>
            <person name="Bruce D."/>
            <person name="Goodwin L."/>
            <person name="Pitluck S."/>
            <person name="Sims D."/>
            <person name="Kiss H."/>
            <person name="Brettin T."/>
            <person name="Detter J.C."/>
            <person name="Han C."/>
            <person name="Larimer F."/>
            <person name="Land M."/>
            <person name="Hauser L."/>
            <person name="Kyrpides N."/>
            <person name="Ovchinnikova G."/>
            <person name="Bryant D.A."/>
            <person name="Richardson P."/>
        </authorList>
    </citation>
    <scope>NUCLEOTIDE SEQUENCE [LARGE SCALE GENOMIC DNA]</scope>
    <source>
        <strain>ATCC 29364 / DSM 637 / Y-400-fl</strain>
    </source>
</reference>
<gene>
    <name type="ordered locus">Chy400_1472</name>
</gene>
<protein>
    <recommendedName>
        <fullName evidence="1">Acetaldehyde dehydrogenase</fullName>
        <ecNumber evidence="1">1.2.1.10</ecNumber>
    </recommendedName>
    <alternativeName>
        <fullName evidence="1">Acetaldehyde dehydrogenase [acetylating]</fullName>
    </alternativeName>
</protein>
<dbReference type="EC" id="1.2.1.10" evidence="1"/>
<dbReference type="EMBL" id="CP001364">
    <property type="protein sequence ID" value="ACM52890.1"/>
    <property type="molecule type" value="Genomic_DNA"/>
</dbReference>
<dbReference type="SMR" id="B9LCM0"/>
<dbReference type="KEGG" id="chl:Chy400_1472"/>
<dbReference type="HOGENOM" id="CLU_062208_0_0_0"/>
<dbReference type="OrthoDB" id="9783105at2"/>
<dbReference type="GO" id="GO:0008774">
    <property type="term" value="F:acetaldehyde dehydrogenase (acetylating) activity"/>
    <property type="evidence" value="ECO:0007669"/>
    <property type="project" value="UniProtKB-UniRule"/>
</dbReference>
<dbReference type="GO" id="GO:0051287">
    <property type="term" value="F:NAD binding"/>
    <property type="evidence" value="ECO:0007669"/>
    <property type="project" value="UniProtKB-UniRule"/>
</dbReference>
<dbReference type="GO" id="GO:0009056">
    <property type="term" value="P:catabolic process"/>
    <property type="evidence" value="ECO:0007669"/>
    <property type="project" value="UniProtKB-KW"/>
</dbReference>
<dbReference type="CDD" id="cd23933">
    <property type="entry name" value="ALDH_C"/>
    <property type="match status" value="1"/>
</dbReference>
<dbReference type="Gene3D" id="3.30.360.10">
    <property type="entry name" value="Dihydrodipicolinate Reductase, domain 2"/>
    <property type="match status" value="1"/>
</dbReference>
<dbReference type="Gene3D" id="3.40.50.720">
    <property type="entry name" value="NAD(P)-binding Rossmann-like Domain"/>
    <property type="match status" value="1"/>
</dbReference>
<dbReference type="HAMAP" id="MF_01657">
    <property type="entry name" value="Ac_ald_DH_ac"/>
    <property type="match status" value="1"/>
</dbReference>
<dbReference type="InterPro" id="IPR003361">
    <property type="entry name" value="Acetaldehyde_dehydrogenase"/>
</dbReference>
<dbReference type="InterPro" id="IPR015426">
    <property type="entry name" value="Acetylaldehyde_DH_C"/>
</dbReference>
<dbReference type="InterPro" id="IPR036291">
    <property type="entry name" value="NAD(P)-bd_dom_sf"/>
</dbReference>
<dbReference type="InterPro" id="IPR000534">
    <property type="entry name" value="Semialdehyde_DH_NAD-bd"/>
</dbReference>
<dbReference type="NCBIfam" id="TIGR03215">
    <property type="entry name" value="ac_ald_DH_ac"/>
    <property type="match status" value="1"/>
</dbReference>
<dbReference type="NCBIfam" id="NF006157">
    <property type="entry name" value="PRK08300.1"/>
    <property type="match status" value="1"/>
</dbReference>
<dbReference type="Pfam" id="PF09290">
    <property type="entry name" value="AcetDehyd-dimer"/>
    <property type="match status" value="1"/>
</dbReference>
<dbReference type="Pfam" id="PF01118">
    <property type="entry name" value="Semialdhyde_dh"/>
    <property type="match status" value="1"/>
</dbReference>
<dbReference type="PIRSF" id="PIRSF015689">
    <property type="entry name" value="Actaldh_dh_actl"/>
    <property type="match status" value="1"/>
</dbReference>
<dbReference type="SMART" id="SM00859">
    <property type="entry name" value="Semialdhyde_dh"/>
    <property type="match status" value="1"/>
</dbReference>
<dbReference type="SUPFAM" id="SSF55347">
    <property type="entry name" value="Glyceraldehyde-3-phosphate dehydrogenase-like, C-terminal domain"/>
    <property type="match status" value="1"/>
</dbReference>
<dbReference type="SUPFAM" id="SSF51735">
    <property type="entry name" value="NAD(P)-binding Rossmann-fold domains"/>
    <property type="match status" value="1"/>
</dbReference>
<sequence length="305" mass="32852">MQIDKVKVAILGSGNIGTDLMYKLLKQPGRMELALVAGIDPASEGLARARQIGIPTATDGIESILADPDIRIVFDATSAKAHVRHARLLRDHGRIAIDLTPAARGPYVVPPVNLGEHLEAHNVNLITCGGQATIPLVYAVSRVTAVRYAEMVSTVASRSAGPGTRQNIDEFTFTTARGLEAIGGAREAKAIIILNPAHPPILMRNTIYVVPEGDFDEETVRQSVAQMVADVQQYVPGYRLKSLPVIEQRSTPWGERPVIIMLLEVEGAGDFLPTYAGNLDIMTAAARRVGELFAAHLLSKLEVTV</sequence>
<feature type="chain" id="PRO_0000387648" description="Acetaldehyde dehydrogenase">
    <location>
        <begin position="1"/>
        <end position="305"/>
    </location>
</feature>
<feature type="active site" description="Acyl-thioester intermediate" evidence="1">
    <location>
        <position position="128"/>
    </location>
</feature>
<feature type="binding site" evidence="1">
    <location>
        <begin position="13"/>
        <end position="16"/>
    </location>
    <ligand>
        <name>NAD(+)</name>
        <dbReference type="ChEBI" id="CHEBI:57540"/>
    </ligand>
</feature>
<feature type="binding site" evidence="1">
    <location>
        <begin position="159"/>
        <end position="167"/>
    </location>
    <ligand>
        <name>NAD(+)</name>
        <dbReference type="ChEBI" id="CHEBI:57540"/>
    </ligand>
</feature>
<feature type="binding site" evidence="1">
    <location>
        <position position="278"/>
    </location>
    <ligand>
        <name>NAD(+)</name>
        <dbReference type="ChEBI" id="CHEBI:57540"/>
    </ligand>
</feature>
<name>ACDH_CHLSY</name>
<organism>
    <name type="scientific">Chloroflexus aurantiacus (strain ATCC 29364 / DSM 637 / Y-400-fl)</name>
    <dbReference type="NCBI Taxonomy" id="480224"/>
    <lineage>
        <taxon>Bacteria</taxon>
        <taxon>Bacillati</taxon>
        <taxon>Chloroflexota</taxon>
        <taxon>Chloroflexia</taxon>
        <taxon>Chloroflexales</taxon>
        <taxon>Chloroflexineae</taxon>
        <taxon>Chloroflexaceae</taxon>
        <taxon>Chloroflexus</taxon>
    </lineage>
</organism>
<evidence type="ECO:0000255" key="1">
    <source>
        <dbReference type="HAMAP-Rule" id="MF_01657"/>
    </source>
</evidence>
<comment type="catalytic activity">
    <reaction evidence="1">
        <text>acetaldehyde + NAD(+) + CoA = acetyl-CoA + NADH + H(+)</text>
        <dbReference type="Rhea" id="RHEA:23288"/>
        <dbReference type="ChEBI" id="CHEBI:15343"/>
        <dbReference type="ChEBI" id="CHEBI:15378"/>
        <dbReference type="ChEBI" id="CHEBI:57287"/>
        <dbReference type="ChEBI" id="CHEBI:57288"/>
        <dbReference type="ChEBI" id="CHEBI:57540"/>
        <dbReference type="ChEBI" id="CHEBI:57945"/>
        <dbReference type="EC" id="1.2.1.10"/>
    </reaction>
</comment>
<comment type="similarity">
    <text evidence="1">Belongs to the acetaldehyde dehydrogenase family.</text>
</comment>
<accession>B9LCM0</accession>